<comment type="function">
    <text evidence="1">Receptor for TNFSF2/TNF-alpha and homotrimeric TNFSF1/lymphotoxin-alpha. The adapter molecule FADD recruits caspase-8 to the activated receptor. The resulting death-inducing signaling complex (DISC) performs caspase-8 proteolytic activation which initiates the subsequent cascade of caspases (aspartate-specific cysteine proteases) mediating apoptosis (By similarity).</text>
</comment>
<comment type="subunit">
    <text evidence="2 3">Binding of TNF to the extracellular domain leads to homotrimerization. The aggregated death domains provide a novel molecular interface that interacts specifically with the death domain of TRADD. Various TRADD-interacting proteins such as TRAFS, RIPK1 and possibly FADD, are recruited to the complex by their association with TRADD. This complex activates at least two distinct signaling cascades, apoptosis and NF-kappa-B signaling. Interacts with BAG4, BABAM2, FEM1B, GRB2, SQSTM1 and TRPC4AP. Interacts with DAB2IP. Interacts directly with NOL3 (via CARD domain); inhibits TNF-signaling pathway. Interacts with SH3RF2, TRADD and RIPK1. SH3RF2 facilitates the recruitment of RIPK1 and TRADD to TNFRSF1A in a TNF-alpha-dependent process. Interacts with PGLYRP1; this interaction is important for cell death induction. Interacts (via death domain) with MADD (via death domain) (By similarity).</text>
</comment>
<comment type="subcellular location">
    <subcellularLocation>
        <location>Cell membrane</location>
        <topology>Single-pass type I membrane protein</topology>
    </subcellularLocation>
    <subcellularLocation>
        <location evidence="1">Golgi apparatus membrane</location>
        <topology evidence="1">Single-pass type I membrane protein</topology>
    </subcellularLocation>
</comment>
<comment type="domain">
    <text evidence="1">Both the cytoplasmic membrane-proximal region and the C-terminal region containing the death domain are involved in the interaction with TRPC4AP.</text>
</comment>
<organism>
    <name type="scientific">Sus scrofa</name>
    <name type="common">Pig</name>
    <dbReference type="NCBI Taxonomy" id="9823"/>
    <lineage>
        <taxon>Eukaryota</taxon>
        <taxon>Metazoa</taxon>
        <taxon>Chordata</taxon>
        <taxon>Craniata</taxon>
        <taxon>Vertebrata</taxon>
        <taxon>Euteleostomi</taxon>
        <taxon>Mammalia</taxon>
        <taxon>Eutheria</taxon>
        <taxon>Laurasiatheria</taxon>
        <taxon>Artiodactyla</taxon>
        <taxon>Suina</taxon>
        <taxon>Suidae</taxon>
        <taxon>Sus</taxon>
    </lineage>
</organism>
<name>TNR1A_PIG</name>
<protein>
    <recommendedName>
        <fullName>Tumor necrosis factor receptor superfamily member 1A</fullName>
    </recommendedName>
    <alternativeName>
        <fullName>Tumor necrosis factor receptor 1</fullName>
        <shortName>TNF-R1</shortName>
    </alternativeName>
    <alternativeName>
        <fullName>Tumor necrosis factor receptor type I</fullName>
        <shortName>TNF-RI</shortName>
        <shortName>TNFR-I</shortName>
    </alternativeName>
    <alternativeName>
        <fullName>p55</fullName>
    </alternativeName>
    <alternativeName>
        <fullName>p60</fullName>
    </alternativeName>
    <cdAntigenName>CD120a</cdAntigenName>
</protein>
<proteinExistence type="evidence at transcript level"/>
<keyword id="KW-0053">Apoptosis</keyword>
<keyword id="KW-1003">Cell membrane</keyword>
<keyword id="KW-1015">Disulfide bond</keyword>
<keyword id="KW-0325">Glycoprotein</keyword>
<keyword id="KW-0333">Golgi apparatus</keyword>
<keyword id="KW-0472">Membrane</keyword>
<keyword id="KW-0675">Receptor</keyword>
<keyword id="KW-1185">Reference proteome</keyword>
<keyword id="KW-0677">Repeat</keyword>
<keyword id="KW-0732">Signal</keyword>
<keyword id="KW-0812">Transmembrane</keyword>
<keyword id="KW-1133">Transmembrane helix</keyword>
<reference key="1">
    <citation type="journal article" date="1995" name="Gene">
        <title>Cloning of the cDNA encoding the porcine p55 tumor necrosis factor receptor.</title>
        <authorList>
            <person name="Suter B."/>
            <person name="Pauli U.H."/>
        </authorList>
    </citation>
    <scope>NUCLEOTIDE SEQUENCE [MRNA]</scope>
    <source>
        <tissue>Kidney</tissue>
    </source>
</reference>
<sequence length="461" mass="50696">MGLSTVPGLLLPLVLRALLVDVYPAGVHGLVLHPGDREKRESLCPQGKYSHPQNRSICCTKCHKGTYLHNDCLGPGLDTDCRECDNGTFTASENHLTQCLSCSKCRSEMSQVEISPCTVDRDTVCGCRKNQYRKYWSETLFQCLNCSLCPNGTVQLPCLEKQDTICNCHSGFFLRDKECVSCVNCKNADCKNLCPATSETRNDFQDTGTTVLLPLVIFFGLCLAFFLFVGLACRYQRWKPKLYSIICGKSTPVKEGEPEPLATAPSFGPITTFSPIPSFSPTTTFSPVPSFSPISSPTFTPCDWSNIKVTSPPKEIAPPPQGAGPILPMPPASTPVPTPLPKWGGSAHSAHSAPAQLADADPATLYAVVDGVPPTRWKEFVRRLGLSEHEIERLELQNGRCLREAQYSMLAEWRRRTSRREATLELLGSVLRDMDLLGCLEDIEEALRGPARLAPAPHLLR</sequence>
<dbReference type="EMBL" id="U19994">
    <property type="protein sequence ID" value="AAC48499.1"/>
    <property type="molecule type" value="mRNA"/>
</dbReference>
<dbReference type="PIR" id="JC4302">
    <property type="entry name" value="JC4302"/>
</dbReference>
<dbReference type="RefSeq" id="NP_999134.1">
    <property type="nucleotide sequence ID" value="NM_213969.1"/>
</dbReference>
<dbReference type="SMR" id="P50555"/>
<dbReference type="FunCoup" id="P50555">
    <property type="interactions" value="544"/>
</dbReference>
<dbReference type="STRING" id="9823.ENSSSCP00000035606"/>
<dbReference type="GlyCosmos" id="P50555">
    <property type="glycosylation" value="4 sites, No reported glycans"/>
</dbReference>
<dbReference type="GlyGen" id="P50555">
    <property type="glycosylation" value="4 sites"/>
</dbReference>
<dbReference type="PaxDb" id="9823-ENSSSCP00000000755"/>
<dbReference type="GeneID" id="397020"/>
<dbReference type="KEGG" id="ssc:397020"/>
<dbReference type="CTD" id="7132"/>
<dbReference type="eggNOG" id="ENOG502S050">
    <property type="taxonomic scope" value="Eukaryota"/>
</dbReference>
<dbReference type="InParanoid" id="P50555"/>
<dbReference type="OrthoDB" id="9408020at2759"/>
<dbReference type="Proteomes" id="UP000008227">
    <property type="component" value="Unplaced"/>
</dbReference>
<dbReference type="Proteomes" id="UP000314985">
    <property type="component" value="Unplaced"/>
</dbReference>
<dbReference type="Proteomes" id="UP000694570">
    <property type="component" value="Unplaced"/>
</dbReference>
<dbReference type="Proteomes" id="UP000694571">
    <property type="component" value="Unplaced"/>
</dbReference>
<dbReference type="Proteomes" id="UP000694720">
    <property type="component" value="Unplaced"/>
</dbReference>
<dbReference type="Proteomes" id="UP000694722">
    <property type="component" value="Unplaced"/>
</dbReference>
<dbReference type="Proteomes" id="UP000694723">
    <property type="component" value="Unplaced"/>
</dbReference>
<dbReference type="Proteomes" id="UP000694724">
    <property type="component" value="Unplaced"/>
</dbReference>
<dbReference type="Proteomes" id="UP000694725">
    <property type="component" value="Unplaced"/>
</dbReference>
<dbReference type="Proteomes" id="UP000694726">
    <property type="component" value="Unplaced"/>
</dbReference>
<dbReference type="Proteomes" id="UP000694727">
    <property type="component" value="Unplaced"/>
</dbReference>
<dbReference type="Proteomes" id="UP000694728">
    <property type="component" value="Unplaced"/>
</dbReference>
<dbReference type="GO" id="GO:0000139">
    <property type="term" value="C:Golgi membrane"/>
    <property type="evidence" value="ECO:0000250"/>
    <property type="project" value="UniProtKB"/>
</dbReference>
<dbReference type="GO" id="GO:0045121">
    <property type="term" value="C:membrane raft"/>
    <property type="evidence" value="ECO:0000318"/>
    <property type="project" value="GO_Central"/>
</dbReference>
<dbReference type="GO" id="GO:0005886">
    <property type="term" value="C:plasma membrane"/>
    <property type="evidence" value="ECO:0007669"/>
    <property type="project" value="UniProtKB-SubCell"/>
</dbReference>
<dbReference type="GO" id="GO:0043235">
    <property type="term" value="C:receptor complex"/>
    <property type="evidence" value="ECO:0000318"/>
    <property type="project" value="GO_Central"/>
</dbReference>
<dbReference type="GO" id="GO:0043120">
    <property type="term" value="F:tumor necrosis factor binding"/>
    <property type="evidence" value="ECO:0000318"/>
    <property type="project" value="GO_Central"/>
</dbReference>
<dbReference type="GO" id="GO:0005031">
    <property type="term" value="F:tumor necrosis factor receptor activity"/>
    <property type="evidence" value="ECO:0000250"/>
    <property type="project" value="UniProtKB"/>
</dbReference>
<dbReference type="GO" id="GO:0006915">
    <property type="term" value="P:apoptotic process"/>
    <property type="evidence" value="ECO:0007669"/>
    <property type="project" value="UniProtKB-KW"/>
</dbReference>
<dbReference type="GO" id="GO:0007166">
    <property type="term" value="P:cell surface receptor signaling pathway"/>
    <property type="evidence" value="ECO:0000250"/>
    <property type="project" value="UniProtKB"/>
</dbReference>
<dbReference type="GO" id="GO:0019221">
    <property type="term" value="P:cytokine-mediated signaling pathway"/>
    <property type="evidence" value="ECO:0000250"/>
    <property type="project" value="UniProtKB"/>
</dbReference>
<dbReference type="GO" id="GO:0006952">
    <property type="term" value="P:defense response"/>
    <property type="evidence" value="ECO:0000250"/>
    <property type="project" value="UniProtKB"/>
</dbReference>
<dbReference type="GO" id="GO:0006954">
    <property type="term" value="P:inflammatory response"/>
    <property type="evidence" value="ECO:0000250"/>
    <property type="project" value="UniProtKB"/>
</dbReference>
<dbReference type="GO" id="GO:0050729">
    <property type="term" value="P:positive regulation of inflammatory response"/>
    <property type="evidence" value="ECO:0000250"/>
    <property type="project" value="UniProtKB"/>
</dbReference>
<dbReference type="GO" id="GO:0045944">
    <property type="term" value="P:positive regulation of transcription by RNA polymerase II"/>
    <property type="evidence" value="ECO:0000250"/>
    <property type="project" value="UniProtKB"/>
</dbReference>
<dbReference type="GO" id="GO:0006693">
    <property type="term" value="P:prostaglandin metabolic process"/>
    <property type="evidence" value="ECO:0007669"/>
    <property type="project" value="InterPro"/>
</dbReference>
<dbReference type="CDD" id="cd08313">
    <property type="entry name" value="Death_TNFR1"/>
    <property type="match status" value="1"/>
</dbReference>
<dbReference type="CDD" id="cd10576">
    <property type="entry name" value="TNFRSF1A"/>
    <property type="match status" value="1"/>
</dbReference>
<dbReference type="FunFam" id="1.10.533.10:FF:000044">
    <property type="entry name" value="Tumor necrosis factor receptor superfamily member 1A"/>
    <property type="match status" value="1"/>
</dbReference>
<dbReference type="FunFam" id="2.10.50.10:FF:000020">
    <property type="entry name" value="Tumor necrosis factor receptor superfamily member 1A"/>
    <property type="match status" value="1"/>
</dbReference>
<dbReference type="FunFam" id="2.10.50.10:FF:000025">
    <property type="entry name" value="Tumor necrosis factor receptor superfamily member 1A"/>
    <property type="match status" value="1"/>
</dbReference>
<dbReference type="Gene3D" id="1.10.533.10">
    <property type="entry name" value="Death Domain, Fas"/>
    <property type="match status" value="1"/>
</dbReference>
<dbReference type="Gene3D" id="2.10.50.10">
    <property type="entry name" value="Tumor Necrosis Factor Receptor, subunit A, domain 2"/>
    <property type="match status" value="2"/>
</dbReference>
<dbReference type="InterPro" id="IPR011029">
    <property type="entry name" value="DEATH-like_dom_sf"/>
</dbReference>
<dbReference type="InterPro" id="IPR000488">
    <property type="entry name" value="Death_dom"/>
</dbReference>
<dbReference type="InterPro" id="IPR001368">
    <property type="entry name" value="TNFR/NGFR_Cys_rich_reg"/>
</dbReference>
<dbReference type="InterPro" id="IPR020419">
    <property type="entry name" value="TNFR_1A"/>
</dbReference>
<dbReference type="InterPro" id="IPR052493">
    <property type="entry name" value="TNFRSF1A"/>
</dbReference>
<dbReference type="InterPro" id="IPR033994">
    <property type="entry name" value="TNFRSF1A_death"/>
</dbReference>
<dbReference type="InterPro" id="IPR033993">
    <property type="entry name" value="TNFRSF1A_N"/>
</dbReference>
<dbReference type="PANTHER" id="PTHR46861">
    <property type="entry name" value="TUMOR NECROSIS FACTOR RECEPTOR SUPERFAMILY MEMBER 1A"/>
    <property type="match status" value="1"/>
</dbReference>
<dbReference type="PANTHER" id="PTHR46861:SF1">
    <property type="entry name" value="TUMOR NECROSIS FACTOR RECEPTOR SUPERFAMILY MEMBER 1A"/>
    <property type="match status" value="1"/>
</dbReference>
<dbReference type="Pfam" id="PF00531">
    <property type="entry name" value="Death"/>
    <property type="match status" value="1"/>
</dbReference>
<dbReference type="Pfam" id="PF00020">
    <property type="entry name" value="TNFR_c6"/>
    <property type="match status" value="2"/>
</dbReference>
<dbReference type="PRINTS" id="PR01918">
    <property type="entry name" value="TNFACTORR1A"/>
</dbReference>
<dbReference type="SMART" id="SM00005">
    <property type="entry name" value="DEATH"/>
    <property type="match status" value="1"/>
</dbReference>
<dbReference type="SMART" id="SM00208">
    <property type="entry name" value="TNFR"/>
    <property type="match status" value="4"/>
</dbReference>
<dbReference type="SUPFAM" id="SSF47986">
    <property type="entry name" value="DEATH domain"/>
    <property type="match status" value="1"/>
</dbReference>
<dbReference type="SUPFAM" id="SSF57586">
    <property type="entry name" value="TNF receptor-like"/>
    <property type="match status" value="3"/>
</dbReference>
<dbReference type="PROSITE" id="PS50017">
    <property type="entry name" value="DEATH_DOMAIN"/>
    <property type="match status" value="1"/>
</dbReference>
<dbReference type="PROSITE" id="PS00652">
    <property type="entry name" value="TNFR_NGFR_1"/>
    <property type="match status" value="3"/>
</dbReference>
<dbReference type="PROSITE" id="PS50050">
    <property type="entry name" value="TNFR_NGFR_2"/>
    <property type="match status" value="2"/>
</dbReference>
<evidence type="ECO:0000250" key="1"/>
<evidence type="ECO:0000250" key="2">
    <source>
        <dbReference type="UniProtKB" id="P19438"/>
    </source>
</evidence>
<evidence type="ECO:0000250" key="3">
    <source>
        <dbReference type="UniProtKB" id="P25118"/>
    </source>
</evidence>
<evidence type="ECO:0000255" key="4"/>
<evidence type="ECO:0000255" key="5">
    <source>
        <dbReference type="PROSITE-ProRule" id="PRU00064"/>
    </source>
</evidence>
<evidence type="ECO:0000255" key="6">
    <source>
        <dbReference type="PROSITE-ProRule" id="PRU00206"/>
    </source>
</evidence>
<feature type="signal peptide" evidence="2">
    <location>
        <begin position="1"/>
        <end position="29"/>
    </location>
</feature>
<feature type="chain" id="PRO_0000034546" description="Tumor necrosis factor receptor superfamily member 1A">
    <location>
        <begin position="30"/>
        <end position="461"/>
    </location>
</feature>
<feature type="topological domain" description="Extracellular" evidence="4">
    <location>
        <begin position="30"/>
        <end position="210"/>
    </location>
</feature>
<feature type="transmembrane region" description="Helical" evidence="4">
    <location>
        <begin position="211"/>
        <end position="233"/>
    </location>
</feature>
<feature type="topological domain" description="Cytoplasmic" evidence="4">
    <location>
        <begin position="234"/>
        <end position="461"/>
    </location>
</feature>
<feature type="repeat" description="TNFR-Cys 1">
    <location>
        <begin position="43"/>
        <end position="82"/>
    </location>
</feature>
<feature type="repeat" description="TNFR-Cys 2">
    <location>
        <begin position="83"/>
        <end position="125"/>
    </location>
</feature>
<feature type="repeat" description="TNFR-Cys 3">
    <location>
        <begin position="126"/>
        <end position="166"/>
    </location>
</feature>
<feature type="repeat" description="TNFR-Cys 4">
    <location>
        <begin position="167"/>
        <end position="195"/>
    </location>
</feature>
<feature type="domain" description="Death" evidence="5">
    <location>
        <begin position="362"/>
        <end position="447"/>
    </location>
</feature>
<feature type="region of interest" description="N-SMase activation domain (NSD)">
    <location>
        <begin position="340"/>
        <end position="350"/>
    </location>
</feature>
<feature type="glycosylation site" description="N-linked (GlcNAc...) asparagine" evidence="4">
    <location>
        <position position="54"/>
    </location>
</feature>
<feature type="glycosylation site" description="N-linked (GlcNAc...) asparagine" evidence="4">
    <location>
        <position position="86"/>
    </location>
</feature>
<feature type="glycosylation site" description="N-linked (GlcNAc...) asparagine" evidence="4">
    <location>
        <position position="145"/>
    </location>
</feature>
<feature type="glycosylation site" description="N-linked (GlcNAc...) asparagine" evidence="4">
    <location>
        <position position="151"/>
    </location>
</feature>
<feature type="disulfide bond" evidence="6">
    <location>
        <begin position="44"/>
        <end position="58"/>
    </location>
</feature>
<feature type="disulfide bond" evidence="6">
    <location>
        <begin position="59"/>
        <end position="72"/>
    </location>
</feature>
<feature type="disulfide bond" evidence="6">
    <location>
        <begin position="62"/>
        <end position="81"/>
    </location>
</feature>
<feature type="disulfide bond" evidence="6">
    <location>
        <begin position="84"/>
        <end position="99"/>
    </location>
</feature>
<feature type="disulfide bond" evidence="6">
    <location>
        <begin position="102"/>
        <end position="117"/>
    </location>
</feature>
<feature type="disulfide bond" evidence="6">
    <location>
        <begin position="105"/>
        <end position="125"/>
    </location>
</feature>
<feature type="disulfide bond" evidence="6">
    <location>
        <begin position="127"/>
        <end position="143"/>
    </location>
</feature>
<feature type="disulfide bond" evidence="6">
    <location>
        <begin position="146"/>
        <end position="158"/>
    </location>
</feature>
<feature type="disulfide bond" evidence="6">
    <location>
        <begin position="149"/>
        <end position="166"/>
    </location>
</feature>
<feature type="disulfide bond" evidence="6">
    <location>
        <begin position="168"/>
        <end position="179"/>
    </location>
</feature>
<feature type="disulfide bond" evidence="6">
    <location>
        <begin position="182"/>
        <end position="194"/>
    </location>
</feature>
<feature type="disulfide bond" evidence="6">
    <location>
        <begin position="185"/>
        <end position="190"/>
    </location>
</feature>
<gene>
    <name type="primary">TNFRSF1A</name>
    <name type="synonym">TNFR1</name>
</gene>
<accession>P50555</accession>